<protein>
    <recommendedName>
        <fullName>Rubisco accumulation factor 1, chloroplastic</fullName>
    </recommendedName>
</protein>
<sequence length="469" mass="51560">MLSLSHPHPHPASTTAAAAARHHHRRNAPFAPHHRRRRRFAHLTTSAVILGPDGRPIGGGPRDNKLPFTPPPTAPPDQLYQPFHPPPSPLPDKYKDLDLGQRLAVLRDRLGLWHEYAPLISALSREGFTPSSIEEATGISGVEQNSVVVATQVRDSLVADEGGFPAELLRYFDSYGGPELLYELRFLNARQRADAARHAIDRRLEPRGVRELARSMKDFPQRRGDDGWEAFTRDNPGDCLAFARFRQSREAIDAEDSVAELERALEVVDTEPARARVEAELDRARRKAAGEEVDDEDGAANAAAAASRPAVPVVRLMYGEVAEATTVLLLPVVREGDGGEALAHAPRRTRTDADLGMVEVDKGWTRWAVVPGWGPVAEVAGEAVVIELADGRTLPWRSAEAERVLVVANRGRREVVEDGIYVVEREGRLVVEKGRKLAAEGVGEAAAEVLVVVRPPRDEDDMISDDEWD</sequence>
<keyword id="KW-0143">Chaperone</keyword>
<keyword id="KW-0150">Chloroplast</keyword>
<keyword id="KW-0175">Coiled coil</keyword>
<keyword id="KW-0934">Plastid</keyword>
<keyword id="KW-1185">Reference proteome</keyword>
<keyword id="KW-0809">Transit peptide</keyword>
<name>RAF1_ORYSJ</name>
<reference key="1">
    <citation type="journal article" date="2003" name="Science">
        <title>In-depth view of structure, activity, and evolution of rice chromosome 10.</title>
        <authorList>
            <person name="Yu Y."/>
            <person name="Rambo T."/>
            <person name="Currie J."/>
            <person name="Saski C."/>
            <person name="Kim H.-R."/>
            <person name="Collura K."/>
            <person name="Thompson S."/>
            <person name="Simmons J."/>
            <person name="Yang T.-J."/>
            <person name="Nah G."/>
            <person name="Patel A.J."/>
            <person name="Thurmond S."/>
            <person name="Henry D."/>
            <person name="Oates R."/>
            <person name="Palmer M."/>
            <person name="Pries G."/>
            <person name="Gibson J."/>
            <person name="Anderson H."/>
            <person name="Paradkar M."/>
            <person name="Crane L."/>
            <person name="Dale J."/>
            <person name="Carver M.B."/>
            <person name="Wood T."/>
            <person name="Frisch D."/>
            <person name="Engler F."/>
            <person name="Soderlund C."/>
            <person name="Palmer L.E."/>
            <person name="Teytelman L."/>
            <person name="Nascimento L."/>
            <person name="De la Bastide M."/>
            <person name="Spiegel L."/>
            <person name="Ware D."/>
            <person name="O'Shaughnessy A."/>
            <person name="Dike S."/>
            <person name="Dedhia N."/>
            <person name="Preston R."/>
            <person name="Huang E."/>
            <person name="Ferraro K."/>
            <person name="Kuit K."/>
            <person name="Miller B."/>
            <person name="Zutavern T."/>
            <person name="Katzenberger F."/>
            <person name="Muller S."/>
            <person name="Balija V."/>
            <person name="Martienssen R.A."/>
            <person name="Stein L."/>
            <person name="Minx P."/>
            <person name="Johnson D."/>
            <person name="Cordum H."/>
            <person name="Mardis E."/>
            <person name="Cheng Z."/>
            <person name="Jiang J."/>
            <person name="Wilson R."/>
            <person name="McCombie W.R."/>
            <person name="Wing R.A."/>
            <person name="Yuan Q."/>
            <person name="Ouyang S."/>
            <person name="Liu J."/>
            <person name="Jones K.M."/>
            <person name="Gansberger K."/>
            <person name="Moffat K."/>
            <person name="Hill J."/>
            <person name="Tsitrin T."/>
            <person name="Overton L."/>
            <person name="Bera J."/>
            <person name="Kim M."/>
            <person name="Jin S."/>
            <person name="Tallon L."/>
            <person name="Ciecko A."/>
            <person name="Pai G."/>
            <person name="Van Aken S."/>
            <person name="Utterback T."/>
            <person name="Reidmuller S."/>
            <person name="Bormann J."/>
            <person name="Feldblyum T."/>
            <person name="Hsiao J."/>
            <person name="Zismann V."/>
            <person name="Blunt S."/>
            <person name="de Vazeille A.R."/>
            <person name="Shaffer T."/>
            <person name="Koo H."/>
            <person name="Suh B."/>
            <person name="Yang Q."/>
            <person name="Haas B."/>
            <person name="Peterson J."/>
            <person name="Pertea M."/>
            <person name="Volfovsky N."/>
            <person name="Wortman J."/>
            <person name="White O."/>
            <person name="Salzberg S.L."/>
            <person name="Fraser C.M."/>
            <person name="Buell C.R."/>
            <person name="Messing J."/>
            <person name="Song R."/>
            <person name="Fuks G."/>
            <person name="Llaca V."/>
            <person name="Kovchak S."/>
            <person name="Young S."/>
            <person name="Bowers J.E."/>
            <person name="Paterson A.H."/>
            <person name="Johns M.A."/>
            <person name="Mao L."/>
            <person name="Pan H."/>
            <person name="Dean R.A."/>
        </authorList>
    </citation>
    <scope>NUCLEOTIDE SEQUENCE [LARGE SCALE GENOMIC DNA]</scope>
    <source>
        <strain>cv. Nipponbare</strain>
    </source>
</reference>
<reference key="2">
    <citation type="journal article" date="2005" name="Nature">
        <title>The map-based sequence of the rice genome.</title>
        <authorList>
            <consortium name="International rice genome sequencing project (IRGSP)"/>
        </authorList>
    </citation>
    <scope>NUCLEOTIDE SEQUENCE [LARGE SCALE GENOMIC DNA]</scope>
    <source>
        <strain>cv. Nipponbare</strain>
    </source>
</reference>
<reference key="3">
    <citation type="journal article" date="2008" name="Nucleic Acids Res.">
        <title>The rice annotation project database (RAP-DB): 2008 update.</title>
        <authorList>
            <consortium name="The rice annotation project (RAP)"/>
        </authorList>
    </citation>
    <scope>GENOME REANNOTATION</scope>
    <source>
        <strain>cv. Nipponbare</strain>
    </source>
</reference>
<reference key="4">
    <citation type="journal article" date="2013" name="Rice">
        <title>Improvement of the Oryza sativa Nipponbare reference genome using next generation sequence and optical map data.</title>
        <authorList>
            <person name="Kawahara Y."/>
            <person name="de la Bastide M."/>
            <person name="Hamilton J.P."/>
            <person name="Kanamori H."/>
            <person name="McCombie W.R."/>
            <person name="Ouyang S."/>
            <person name="Schwartz D.C."/>
            <person name="Tanaka T."/>
            <person name="Wu J."/>
            <person name="Zhou S."/>
            <person name="Childs K.L."/>
            <person name="Davidson R.M."/>
            <person name="Lin H."/>
            <person name="Quesada-Ocampo L."/>
            <person name="Vaillancourt B."/>
            <person name="Sakai H."/>
            <person name="Lee S.S."/>
            <person name="Kim J."/>
            <person name="Numa H."/>
            <person name="Itoh T."/>
            <person name="Buell C.R."/>
            <person name="Matsumoto T."/>
        </authorList>
    </citation>
    <scope>GENOME REANNOTATION</scope>
    <source>
        <strain>cv. Nipponbare</strain>
    </source>
</reference>
<reference key="5">
    <citation type="journal article" date="2005" name="PLoS Biol.">
        <title>The genomes of Oryza sativa: a history of duplications.</title>
        <authorList>
            <person name="Yu J."/>
            <person name="Wang J."/>
            <person name="Lin W."/>
            <person name="Li S."/>
            <person name="Li H."/>
            <person name="Zhou J."/>
            <person name="Ni P."/>
            <person name="Dong W."/>
            <person name="Hu S."/>
            <person name="Zeng C."/>
            <person name="Zhang J."/>
            <person name="Zhang Y."/>
            <person name="Li R."/>
            <person name="Xu Z."/>
            <person name="Li S."/>
            <person name="Li X."/>
            <person name="Zheng H."/>
            <person name="Cong L."/>
            <person name="Lin L."/>
            <person name="Yin J."/>
            <person name="Geng J."/>
            <person name="Li G."/>
            <person name="Shi J."/>
            <person name="Liu J."/>
            <person name="Lv H."/>
            <person name="Li J."/>
            <person name="Wang J."/>
            <person name="Deng Y."/>
            <person name="Ran L."/>
            <person name="Shi X."/>
            <person name="Wang X."/>
            <person name="Wu Q."/>
            <person name="Li C."/>
            <person name="Ren X."/>
            <person name="Wang J."/>
            <person name="Wang X."/>
            <person name="Li D."/>
            <person name="Liu D."/>
            <person name="Zhang X."/>
            <person name="Ji Z."/>
            <person name="Zhao W."/>
            <person name="Sun Y."/>
            <person name="Zhang Z."/>
            <person name="Bao J."/>
            <person name="Han Y."/>
            <person name="Dong L."/>
            <person name="Ji J."/>
            <person name="Chen P."/>
            <person name="Wu S."/>
            <person name="Liu J."/>
            <person name="Xiao Y."/>
            <person name="Bu D."/>
            <person name="Tan J."/>
            <person name="Yang L."/>
            <person name="Ye C."/>
            <person name="Zhang J."/>
            <person name="Xu J."/>
            <person name="Zhou Y."/>
            <person name="Yu Y."/>
            <person name="Zhang B."/>
            <person name="Zhuang S."/>
            <person name="Wei H."/>
            <person name="Liu B."/>
            <person name="Lei M."/>
            <person name="Yu H."/>
            <person name="Li Y."/>
            <person name="Xu H."/>
            <person name="Wei S."/>
            <person name="He X."/>
            <person name="Fang L."/>
            <person name="Zhang Z."/>
            <person name="Zhang Y."/>
            <person name="Huang X."/>
            <person name="Su Z."/>
            <person name="Tong W."/>
            <person name="Li J."/>
            <person name="Tong Z."/>
            <person name="Li S."/>
            <person name="Ye J."/>
            <person name="Wang L."/>
            <person name="Fang L."/>
            <person name="Lei T."/>
            <person name="Chen C.-S."/>
            <person name="Chen H.-C."/>
            <person name="Xu Z."/>
            <person name="Li H."/>
            <person name="Huang H."/>
            <person name="Zhang F."/>
            <person name="Xu H."/>
            <person name="Li N."/>
            <person name="Zhao C."/>
            <person name="Li S."/>
            <person name="Dong L."/>
            <person name="Huang Y."/>
            <person name="Li L."/>
            <person name="Xi Y."/>
            <person name="Qi Q."/>
            <person name="Li W."/>
            <person name="Zhang B."/>
            <person name="Hu W."/>
            <person name="Zhang Y."/>
            <person name="Tian X."/>
            <person name="Jiao Y."/>
            <person name="Liang X."/>
            <person name="Jin J."/>
            <person name="Gao L."/>
            <person name="Zheng W."/>
            <person name="Hao B."/>
            <person name="Liu S.-M."/>
            <person name="Wang W."/>
            <person name="Yuan L."/>
            <person name="Cao M."/>
            <person name="McDermott J."/>
            <person name="Samudrala R."/>
            <person name="Wang J."/>
            <person name="Wong G.K.-S."/>
            <person name="Yang H."/>
        </authorList>
    </citation>
    <scope>NUCLEOTIDE SEQUENCE [LARGE SCALE GENOMIC DNA]</scope>
    <source>
        <strain>cv. Nipponbare</strain>
    </source>
</reference>
<reference key="6">
    <citation type="journal article" date="2003" name="Science">
        <title>Collection, mapping, and annotation of over 28,000 cDNA clones from japonica rice.</title>
        <authorList>
            <consortium name="The rice full-length cDNA consortium"/>
        </authorList>
    </citation>
    <scope>NUCLEOTIDE SEQUENCE [LARGE SCALE MRNA]</scope>
    <source>
        <strain>cv. Nipponbare</strain>
    </source>
</reference>
<reference key="7">
    <citation type="journal article" date="2012" name="Plant Cell">
        <title>Ribulose-1,5-bis-phosphate carboxylase/oxygenase accumulation factor1 is required for holoenzyme assembly in maize.</title>
        <authorList>
            <person name="Feiz L."/>
            <person name="Williams-Carrier R."/>
            <person name="Wostrikoff K."/>
            <person name="Belcher S."/>
            <person name="Barkan A."/>
            <person name="Stern D.B."/>
        </authorList>
    </citation>
    <scope>IDENTIFICATION</scope>
</reference>
<comment type="function">
    <text evidence="1">Required for assembly or stability of RuBisCO. Acts at a postchaperonin step to fold and/or assemble the large subunit (LS) into RuBisCO (By similarity).</text>
</comment>
<comment type="subcellular location">
    <subcellularLocation>
        <location evidence="6">Plastid</location>
        <location evidence="6">Chloroplast</location>
    </subcellularLocation>
</comment>
<comment type="domain">
    <text evidence="2 3">Has 3 domains, the N-terminal alpha-helical domain, an extended flexible linker and the C-terminal beta-sheet domain. The N-terminal alpha-helical domain stabilizes RbcL dimers and RbcL dimer-dimer interactions, facilitating RbcL(8) formation. The C-terminal beta-sheet domain probably dimerizes Raf1 (By similarity). The 2 C-terminal beta-sheet domains are swapped and pack against each other to form the dimer interface (By similarity).</text>
</comment>
<comment type="similarity">
    <text evidence="6">Belongs to the RAF family.</text>
</comment>
<evidence type="ECO:0000250" key="1"/>
<evidence type="ECO:0000250" key="2">
    <source>
        <dbReference type="UniProtKB" id="Q8YLP6"/>
    </source>
</evidence>
<evidence type="ECO:0000250" key="3">
    <source>
        <dbReference type="UniProtKB" id="Q9SR19"/>
    </source>
</evidence>
<evidence type="ECO:0000255" key="4"/>
<evidence type="ECO:0000256" key="5">
    <source>
        <dbReference type="SAM" id="MobiDB-lite"/>
    </source>
</evidence>
<evidence type="ECO:0000305" key="6"/>
<feature type="transit peptide" description="Chloroplast" evidence="4">
    <location>
        <begin position="1"/>
        <end position="46"/>
    </location>
</feature>
<feature type="chain" id="PRO_0000424241" description="Rubisco accumulation factor 1, chloroplastic">
    <location>
        <begin position="47"/>
        <end position="469"/>
    </location>
</feature>
<feature type="region of interest" description="Disordered" evidence="5">
    <location>
        <begin position="1"/>
        <end position="78"/>
    </location>
</feature>
<feature type="region of interest" description="N-terminal alpha-helix" evidence="3">
    <location>
        <begin position="90"/>
        <end position="281"/>
    </location>
</feature>
<feature type="region of interest" description="C-terminal beta sheet" evidence="3">
    <location>
        <begin position="311"/>
        <end position="456"/>
    </location>
</feature>
<feature type="coiled-coil region" evidence="4">
    <location>
        <begin position="246"/>
        <end position="294"/>
    </location>
</feature>
<feature type="compositionally biased region" description="Basic residues" evidence="5">
    <location>
        <begin position="20"/>
        <end position="41"/>
    </location>
</feature>
<gene>
    <name type="primary">RAF1</name>
    <name type="ordered locus">Os10g0445600</name>
    <name type="ordered locus">LOC_Os10g30870</name>
    <name type="ORF">OsJ_31693</name>
</gene>
<proteinExistence type="evidence at transcript level"/>
<organism>
    <name type="scientific">Oryza sativa subsp. japonica</name>
    <name type="common">Rice</name>
    <dbReference type="NCBI Taxonomy" id="39947"/>
    <lineage>
        <taxon>Eukaryota</taxon>
        <taxon>Viridiplantae</taxon>
        <taxon>Streptophyta</taxon>
        <taxon>Embryophyta</taxon>
        <taxon>Tracheophyta</taxon>
        <taxon>Spermatophyta</taxon>
        <taxon>Magnoliopsida</taxon>
        <taxon>Liliopsida</taxon>
        <taxon>Poales</taxon>
        <taxon>Poaceae</taxon>
        <taxon>BOP clade</taxon>
        <taxon>Oryzoideae</taxon>
        <taxon>Oryzeae</taxon>
        <taxon>Oryzinae</taxon>
        <taxon>Oryza</taxon>
        <taxon>Oryza sativa</taxon>
    </lineage>
</organism>
<dbReference type="EMBL" id="DP000086">
    <property type="protein sequence ID" value="AAP54002.1"/>
    <property type="molecule type" value="Genomic_DNA"/>
</dbReference>
<dbReference type="EMBL" id="AP008216">
    <property type="protein sequence ID" value="BAF26626.1"/>
    <property type="molecule type" value="Genomic_DNA"/>
</dbReference>
<dbReference type="EMBL" id="AP014966">
    <property type="protein sequence ID" value="BAT11069.1"/>
    <property type="molecule type" value="Genomic_DNA"/>
</dbReference>
<dbReference type="EMBL" id="CM000147">
    <property type="protein sequence ID" value="EAZ16239.1"/>
    <property type="molecule type" value="Genomic_DNA"/>
</dbReference>
<dbReference type="EMBL" id="AK120673">
    <property type="protein sequence ID" value="BAH00120.1"/>
    <property type="molecule type" value="mRNA"/>
</dbReference>
<dbReference type="RefSeq" id="XP_015614647.1">
    <property type="nucleotide sequence ID" value="XM_015759161.1"/>
</dbReference>
<dbReference type="SMR" id="Q7XDY9"/>
<dbReference type="FunCoup" id="Q7XDY9">
    <property type="interactions" value="1014"/>
</dbReference>
<dbReference type="STRING" id="39947.Q7XDY9"/>
<dbReference type="PaxDb" id="39947-Q7XDY9"/>
<dbReference type="EnsemblPlants" id="Os10t0445600-01">
    <property type="protein sequence ID" value="Os10t0445600-01"/>
    <property type="gene ID" value="Os10g0445600"/>
</dbReference>
<dbReference type="Gramene" id="Os10t0445600-01">
    <property type="protein sequence ID" value="Os10t0445600-01"/>
    <property type="gene ID" value="Os10g0445600"/>
</dbReference>
<dbReference type="KEGG" id="dosa:Os10g0445600"/>
<dbReference type="eggNOG" id="ENOG502QRYH">
    <property type="taxonomic scope" value="Eukaryota"/>
</dbReference>
<dbReference type="HOGENOM" id="CLU_041979_0_0_1"/>
<dbReference type="InParanoid" id="Q7XDY9"/>
<dbReference type="OMA" id="LWHEYAP"/>
<dbReference type="OrthoDB" id="2017169at2759"/>
<dbReference type="Proteomes" id="UP000000763">
    <property type="component" value="Chromosome 10"/>
</dbReference>
<dbReference type="Proteomes" id="UP000007752">
    <property type="component" value="Chromosome 10"/>
</dbReference>
<dbReference type="Proteomes" id="UP000059680">
    <property type="component" value="Chromosome 10"/>
</dbReference>
<dbReference type="GO" id="GO:0009507">
    <property type="term" value="C:chloroplast"/>
    <property type="evidence" value="ECO:0007669"/>
    <property type="project" value="UniProtKB-SubCell"/>
</dbReference>
<dbReference type="GO" id="GO:0110102">
    <property type="term" value="P:ribulose bisphosphate carboxylase complex assembly"/>
    <property type="evidence" value="ECO:0007669"/>
    <property type="project" value="UniProtKB-ARBA"/>
</dbReference>
<dbReference type="InterPro" id="IPR037494">
    <property type="entry name" value="RAF1"/>
</dbReference>
<dbReference type="InterPro" id="IPR040858">
    <property type="entry name" value="Raf1_C"/>
</dbReference>
<dbReference type="InterPro" id="IPR040781">
    <property type="entry name" value="Raf1_HTH"/>
</dbReference>
<dbReference type="InterPro" id="IPR041358">
    <property type="entry name" value="Raf1_N"/>
</dbReference>
<dbReference type="PANTHER" id="PTHR35299">
    <property type="entry name" value="RUBISCO ACCUMULATION FACTOR 1"/>
    <property type="match status" value="1"/>
</dbReference>
<dbReference type="PANTHER" id="PTHR35299:SF3">
    <property type="entry name" value="RUBISCO ACCUMULATION FACTOR 1.2, CHLOROPLASTIC"/>
    <property type="match status" value="1"/>
</dbReference>
<dbReference type="Pfam" id="PF18579">
    <property type="entry name" value="Raf1_HTH"/>
    <property type="match status" value="1"/>
</dbReference>
<dbReference type="Pfam" id="PF18578">
    <property type="entry name" value="Raf1_N"/>
    <property type="match status" value="1"/>
</dbReference>
<dbReference type="Pfam" id="PF18087">
    <property type="entry name" value="RuBisCo_chap_C"/>
    <property type="match status" value="1"/>
</dbReference>
<accession>Q7XDY9</accession>
<accession>A0A0P0XV97</accession>